<name>TBB_POLAG</name>
<protein>
    <recommendedName>
        <fullName>Tubulin beta chain</fullName>
    </recommendedName>
    <alternativeName>
        <fullName>Beta-tubulin</fullName>
    </alternativeName>
</protein>
<sequence length="443" mass="49576">MREIVHIQGGQCGNQIGAKFWEVVSDEHGIDPTGTALGDSDLQLERINVYFNEATGSRYVPRAILMDLEPGTMDSVRSGPYGQIFRPDNFVFGQTGAGNNWAKGHYTEGAELIDSVLDVVRKEAESCDCLQGFQVCHSLGGGTGSGMGTLLISKIREEYPDRMMLTFSVVPSPKVSDTVVEPYNATLSVHQLVENADECMVLDNEALYDICFRTLKLTTPTFGDLNHLISAVMSGITCCLRFPGQLNADLRKLAVNLIPFPRLHFFMVGFTPLTSRGSQQYRALTVPELTQQMWDAKNMMCAADPRHGRYLTASALFRGRMSTKEVDEQMLNVQNKNSSYFVEWIPNNVKSSVCDIPPKGLKMSATFIGNSTAIQEMFKRVSEQFTAMFRRKAFLHWYTGEGMDEMEFTEAESNMNDLVSEYQQYQDASAEEEGEFGEEEEEN</sequence>
<dbReference type="EMBL" id="M33372">
    <property type="protein sequence ID" value="AAB03892.1"/>
    <property type="molecule type" value="Genomic_DNA"/>
</dbReference>
<dbReference type="EMBL" id="M33373">
    <property type="protein sequence ID" value="AAA33803.1"/>
    <property type="molecule type" value="Genomic_DNA"/>
</dbReference>
<dbReference type="EMBL" id="M33371">
    <property type="protein sequence ID" value="AAA33804.1"/>
    <property type="molecule type" value="Genomic_DNA"/>
</dbReference>
<dbReference type="PIR" id="JQ0177">
    <property type="entry name" value="JQ0177"/>
</dbReference>
<dbReference type="PIR" id="MZ0005">
    <property type="entry name" value="MZ0005"/>
</dbReference>
<dbReference type="SMR" id="P22852"/>
<dbReference type="GO" id="GO:0005737">
    <property type="term" value="C:cytoplasm"/>
    <property type="evidence" value="ECO:0007669"/>
    <property type="project" value="UniProtKB-KW"/>
</dbReference>
<dbReference type="GO" id="GO:0005874">
    <property type="term" value="C:microtubule"/>
    <property type="evidence" value="ECO:0007669"/>
    <property type="project" value="UniProtKB-KW"/>
</dbReference>
<dbReference type="GO" id="GO:0005525">
    <property type="term" value="F:GTP binding"/>
    <property type="evidence" value="ECO:0007669"/>
    <property type="project" value="UniProtKB-KW"/>
</dbReference>
<dbReference type="GO" id="GO:0003924">
    <property type="term" value="F:GTPase activity"/>
    <property type="evidence" value="ECO:0007669"/>
    <property type="project" value="InterPro"/>
</dbReference>
<dbReference type="GO" id="GO:0046872">
    <property type="term" value="F:metal ion binding"/>
    <property type="evidence" value="ECO:0007669"/>
    <property type="project" value="UniProtKB-KW"/>
</dbReference>
<dbReference type="GO" id="GO:0005200">
    <property type="term" value="F:structural constituent of cytoskeleton"/>
    <property type="evidence" value="ECO:0007669"/>
    <property type="project" value="InterPro"/>
</dbReference>
<dbReference type="GO" id="GO:0007017">
    <property type="term" value="P:microtubule-based process"/>
    <property type="evidence" value="ECO:0007669"/>
    <property type="project" value="InterPro"/>
</dbReference>
<dbReference type="CDD" id="cd02187">
    <property type="entry name" value="beta_tubulin"/>
    <property type="match status" value="1"/>
</dbReference>
<dbReference type="FunFam" id="1.10.287.600:FF:000006">
    <property type="entry name" value="Tubulin beta chain"/>
    <property type="match status" value="1"/>
</dbReference>
<dbReference type="FunFam" id="3.30.1330.20:FF:000002">
    <property type="entry name" value="Tubulin beta chain"/>
    <property type="match status" value="1"/>
</dbReference>
<dbReference type="FunFam" id="3.40.50.1440:FF:000005">
    <property type="entry name" value="Tubulin beta chain"/>
    <property type="match status" value="1"/>
</dbReference>
<dbReference type="Gene3D" id="1.10.287.600">
    <property type="entry name" value="Helix hairpin bin"/>
    <property type="match status" value="1"/>
</dbReference>
<dbReference type="Gene3D" id="3.30.1330.20">
    <property type="entry name" value="Tubulin/FtsZ, C-terminal domain"/>
    <property type="match status" value="1"/>
</dbReference>
<dbReference type="Gene3D" id="3.40.50.1440">
    <property type="entry name" value="Tubulin/FtsZ, GTPase domain"/>
    <property type="match status" value="1"/>
</dbReference>
<dbReference type="InterPro" id="IPR013838">
    <property type="entry name" value="Beta-tubulin_BS"/>
</dbReference>
<dbReference type="InterPro" id="IPR002453">
    <property type="entry name" value="Beta_tubulin"/>
</dbReference>
<dbReference type="InterPro" id="IPR008280">
    <property type="entry name" value="Tub_FtsZ_C"/>
</dbReference>
<dbReference type="InterPro" id="IPR000217">
    <property type="entry name" value="Tubulin"/>
</dbReference>
<dbReference type="InterPro" id="IPR037103">
    <property type="entry name" value="Tubulin/FtsZ-like_C"/>
</dbReference>
<dbReference type="InterPro" id="IPR018316">
    <property type="entry name" value="Tubulin/FtsZ_2-layer-sand-dom"/>
</dbReference>
<dbReference type="InterPro" id="IPR036525">
    <property type="entry name" value="Tubulin/FtsZ_GTPase_sf"/>
</dbReference>
<dbReference type="InterPro" id="IPR023123">
    <property type="entry name" value="Tubulin_C"/>
</dbReference>
<dbReference type="InterPro" id="IPR017975">
    <property type="entry name" value="Tubulin_CS"/>
</dbReference>
<dbReference type="InterPro" id="IPR003008">
    <property type="entry name" value="Tubulin_FtsZ_GTPase"/>
</dbReference>
<dbReference type="PANTHER" id="PTHR11588">
    <property type="entry name" value="TUBULIN"/>
    <property type="match status" value="1"/>
</dbReference>
<dbReference type="Pfam" id="PF00091">
    <property type="entry name" value="Tubulin"/>
    <property type="match status" value="1"/>
</dbReference>
<dbReference type="Pfam" id="PF03953">
    <property type="entry name" value="Tubulin_C"/>
    <property type="match status" value="1"/>
</dbReference>
<dbReference type="PRINTS" id="PR01163">
    <property type="entry name" value="BETATUBULIN"/>
</dbReference>
<dbReference type="PRINTS" id="PR01161">
    <property type="entry name" value="TUBULIN"/>
</dbReference>
<dbReference type="SMART" id="SM00864">
    <property type="entry name" value="Tubulin"/>
    <property type="match status" value="1"/>
</dbReference>
<dbReference type="SMART" id="SM00865">
    <property type="entry name" value="Tubulin_C"/>
    <property type="match status" value="1"/>
</dbReference>
<dbReference type="SUPFAM" id="SSF55307">
    <property type="entry name" value="Tubulin C-terminal domain-like"/>
    <property type="match status" value="1"/>
</dbReference>
<dbReference type="SUPFAM" id="SSF52490">
    <property type="entry name" value="Tubulin nucleotide-binding domain-like"/>
    <property type="match status" value="1"/>
</dbReference>
<dbReference type="PROSITE" id="PS00227">
    <property type="entry name" value="TUBULIN"/>
    <property type="match status" value="1"/>
</dbReference>
<dbReference type="PROSITE" id="PS00228">
    <property type="entry name" value="TUBULIN_B_AUTOREG"/>
    <property type="match status" value="1"/>
</dbReference>
<proteinExistence type="inferred from homology"/>
<feature type="chain" id="PRO_0000048374" description="Tubulin beta chain">
    <location>
        <begin position="1"/>
        <end position="443"/>
    </location>
</feature>
<feature type="region of interest" description="Disordered" evidence="3">
    <location>
        <begin position="421"/>
        <end position="443"/>
    </location>
</feature>
<feature type="compositionally biased region" description="Acidic residues" evidence="3">
    <location>
        <begin position="429"/>
        <end position="443"/>
    </location>
</feature>
<feature type="binding site" evidence="2">
    <location>
        <position position="11"/>
    </location>
    <ligand>
        <name>GTP</name>
        <dbReference type="ChEBI" id="CHEBI:37565"/>
    </ligand>
</feature>
<feature type="binding site" evidence="1">
    <location>
        <position position="69"/>
    </location>
    <ligand>
        <name>GTP</name>
        <dbReference type="ChEBI" id="CHEBI:37565"/>
    </ligand>
</feature>
<feature type="binding site" evidence="1">
    <location>
        <position position="69"/>
    </location>
    <ligand>
        <name>Mg(2+)</name>
        <dbReference type="ChEBI" id="CHEBI:18420"/>
    </ligand>
</feature>
<feature type="binding site" evidence="2">
    <location>
        <position position="138"/>
    </location>
    <ligand>
        <name>GTP</name>
        <dbReference type="ChEBI" id="CHEBI:37565"/>
    </ligand>
</feature>
<feature type="binding site" evidence="2">
    <location>
        <position position="142"/>
    </location>
    <ligand>
        <name>GTP</name>
        <dbReference type="ChEBI" id="CHEBI:37565"/>
    </ligand>
</feature>
<feature type="binding site" evidence="2">
    <location>
        <position position="143"/>
    </location>
    <ligand>
        <name>GTP</name>
        <dbReference type="ChEBI" id="CHEBI:37565"/>
    </ligand>
</feature>
<feature type="binding site" evidence="2">
    <location>
        <position position="144"/>
    </location>
    <ligand>
        <name>GTP</name>
        <dbReference type="ChEBI" id="CHEBI:37565"/>
    </ligand>
</feature>
<feature type="binding site" evidence="2">
    <location>
        <position position="204"/>
    </location>
    <ligand>
        <name>GTP</name>
        <dbReference type="ChEBI" id="CHEBI:37565"/>
    </ligand>
</feature>
<feature type="binding site" evidence="2">
    <location>
        <position position="226"/>
    </location>
    <ligand>
        <name>GTP</name>
        <dbReference type="ChEBI" id="CHEBI:37565"/>
    </ligand>
</feature>
<feature type="sequence conflict" description="In Ref. 1; AAA33803." evidence="4" ref="1">
    <original>L</original>
    <variation>I</variation>
    <location>
        <position position="37"/>
    </location>
</feature>
<comment type="function">
    <text>Tubulin is the major constituent of microtubules, a cylinder consisting of laterally associated linear protofilaments composed of alpha- and beta-tubulin heterodimers. Microtubules grow by the addition of GTP-tubulin dimers to the microtubule end, where a stabilizing cap forms. Below the cap, tubulin dimers are in GDP-bound state, owing to GTPase activity of alpha-tubulin.</text>
</comment>
<comment type="cofactor">
    <cofactor evidence="1">
        <name>Mg(2+)</name>
        <dbReference type="ChEBI" id="CHEBI:18420"/>
    </cofactor>
</comment>
<comment type="subunit">
    <text>Dimer of alpha and beta chains. A typical microtubule is a hollow water-filled tube with an outer diameter of 25 nm and an inner diameter of 15 nM. Alpha-beta heterodimers associate head-to-tail to form protofilaments running lengthwise along the microtubule wall with the beta-tubulin subunit facing the microtubule plus end conferring a structural polarity. Microtubules usually have 13 protofilaments but different protofilament numbers can be found in some organisms and specialized cells.</text>
</comment>
<comment type="subcellular location">
    <subcellularLocation>
        <location>Cytoplasm</location>
        <location>Cytoskeleton</location>
    </subcellularLocation>
</comment>
<comment type="miscellaneous">
    <text>The sequences of the three genes coding for beta-tubulin are identical.</text>
</comment>
<comment type="similarity">
    <text evidence="4">Belongs to the tubulin family.</text>
</comment>
<keyword id="KW-0963">Cytoplasm</keyword>
<keyword id="KW-0206">Cytoskeleton</keyword>
<keyword id="KW-0342">GTP-binding</keyword>
<keyword id="KW-0460">Magnesium</keyword>
<keyword id="KW-0479">Metal-binding</keyword>
<keyword id="KW-0493">Microtubule</keyword>
<keyword id="KW-0547">Nucleotide-binding</keyword>
<reference key="1">
    <citation type="journal article" date="1989" name="Gene">
        <title>Structure of the three beta-tubulin-encoding genes of the unicellular alga, Polytomella agilis.</title>
        <authorList>
            <person name="Conner T.W."/>
            <person name="Thompson M.D."/>
            <person name="Silflow C.D."/>
        </authorList>
    </citation>
    <scope>NUCLEOTIDE SEQUENCE [GENOMIC DNA]</scope>
</reference>
<gene>
    <name type="primary">TUBB1</name>
</gene>
<gene>
    <name type="primary">TUBB2</name>
</gene>
<gene>
    <name type="primary">TUBB3</name>
</gene>
<accession>P22852</accession>
<organism>
    <name type="scientific">Polytomella agilis</name>
    <name type="common">Quadriflagellate alga</name>
    <dbReference type="NCBI Taxonomy" id="3050"/>
    <lineage>
        <taxon>Eukaryota</taxon>
        <taxon>Viridiplantae</taxon>
        <taxon>Chlorophyta</taxon>
        <taxon>core chlorophytes</taxon>
        <taxon>Chlorophyceae</taxon>
        <taxon>CS clade</taxon>
        <taxon>Chlamydomonadales</taxon>
        <taxon>Chlamydomonadaceae</taxon>
        <taxon>Polytomella</taxon>
    </lineage>
</organism>
<evidence type="ECO:0000250" key="1">
    <source>
        <dbReference type="UniProtKB" id="P68363"/>
    </source>
</evidence>
<evidence type="ECO:0000250" key="2">
    <source>
        <dbReference type="UniProtKB" id="Q13509"/>
    </source>
</evidence>
<evidence type="ECO:0000256" key="3">
    <source>
        <dbReference type="SAM" id="MobiDB-lite"/>
    </source>
</evidence>
<evidence type="ECO:0000305" key="4"/>